<proteinExistence type="evidence at protein level"/>
<sequence>MKKRIRSSYKVGSSNKYHKKNYTDNEKDKKKYRSYKEKHINEKMFDKKEFLNFLTNFNKKFMKKNSLVDHLMKMNDKAEDNYDGYNSSGSRYNNINDDGVELCGTKRYTNNKNNSDYDNYNNNNNMKNKRYSNKKHNNDNIIINNNNNKYTDERKYRNKSIKEDVDYTNDYYNIQLNNNKINNNQTKNKIDTIRNISHEKLGNNKSSSARNLSLIQTSHIPYDAPLADFLENGRFLRTFENISLIGQGGFGSVYKVSHRLEPGSPTYAVKFIYLKVSSLDNVSSRRYFREIAANRDIYSKHVVRYYTWWCEEPQFLPMHLMPKEIQNLVKKNKDTFKKRLTKNKKYSNNCISDSSNNNNSSCYSASSYNSSINSNYRNMKLWIKKKEQSPDMKRYKEVLRKNNAPNLVFYSDNDGLTSKNKENPEKNHNPFLSDKNFSDSIYKKKKSHDYNSSSHKLKKRKNKKKKSKKKRKSKSKIKTNAQGIYEESENDEGRDHFQYKKGKEQFSKFIGKLILWVLHKVSKNMILLIMVILSEEDRDLIVFADNEESNGNDQQMIRHDNMNNENVIIKHRNEDDKNGLDGDKNGLDGDKNGLDGDKNGLDGDKNELDDNKNELDDLLMKQKINSLTRNDIVNIENENPAPHATNNIKNKKVDLNGELTYYDYVGKNEVIPNSRTETNVESINTNGMFNNKFSVMKDEGGEYKKKENMTWGDTKRDGLYENGKHEKDGLGVNKCITNKYIENDDDDDDDDDDNNNNNNIDERKKDLKKKQKNAITKGNEDLLATNGTNNKEKRKKDDDINKNMEKIKSYKKKTPVPEFSIVLLLQMELCKGYTLRKWLDRSTRSDKPLHFTYSDKKMNHPLEFDLFKQLIKGLKDIHATCFIHRDLKPENIFVDNDTYTLKIGDLGLVRFIEEKKREKDFNNIDCYKDNIYTDINQNRITSQISIKGQIIGTPGYTAPEGGALCDEKADIYSAALILLELLCPRFTTIMERYKRLNDFRNYYTVPDYVKIHLNPWYILMLQMSKPNPADRPSAADVYSKIKVLLDPHLTDFAFSFNDIHNEHMNKPPQGTNNFERITDNKDKFVIQSVVDMKNKVENEEIPIEKGLNSNVENIKNENNGADK</sequence>
<name>PK4_PLAFA</name>
<protein>
    <recommendedName>
        <fullName evidence="7">Eukaryotic translation initiation factor 2-alpha kinase PK4</fullName>
        <shortName evidence="7">eIF2alpha kinase PK4</shortName>
        <ecNumber evidence="6">2.7.11.1</ecNumber>
    </recommendedName>
    <alternativeName>
        <fullName evidence="7">Protein kinase PK4</fullName>
        <shortName evidence="7">PfPK4</shortName>
    </alternativeName>
</protein>
<accession>O43948</accession>
<keyword id="KW-0067">ATP-binding</keyword>
<keyword id="KW-0256">Endoplasmic reticulum</keyword>
<keyword id="KW-0418">Kinase</keyword>
<keyword id="KW-0472">Membrane</keyword>
<keyword id="KW-0547">Nucleotide-binding</keyword>
<keyword id="KW-0597">Phosphoprotein</keyword>
<keyword id="KW-0652">Protein synthesis inhibitor</keyword>
<keyword id="KW-0677">Repeat</keyword>
<keyword id="KW-0723">Serine/threonine-protein kinase</keyword>
<keyword id="KW-0808">Transferase</keyword>
<dbReference type="EC" id="2.7.11.1" evidence="6"/>
<dbReference type="EMBL" id="X94118">
    <property type="protein sequence ID" value="CAA63839.1"/>
    <property type="status" value="ALT_INIT"/>
    <property type="molecule type" value="Genomic_DNA"/>
</dbReference>
<dbReference type="PIR" id="T28139">
    <property type="entry name" value="T28139"/>
</dbReference>
<dbReference type="VEuPathDB" id="PlasmoDB:PF3D7_0628200"/>
<dbReference type="VEuPathDB" id="PlasmoDB:Pf7G8-2_000180500"/>
<dbReference type="VEuPathDB" id="PlasmoDB:Pf7G8_060033200"/>
<dbReference type="VEuPathDB" id="PlasmoDB:PfCD01_060033600"/>
<dbReference type="VEuPathDB" id="PlasmoDB:PfDd2_060032900"/>
<dbReference type="VEuPathDB" id="PlasmoDB:PfGA01_060033200"/>
<dbReference type="VEuPathDB" id="PlasmoDB:PfGB4_060032700"/>
<dbReference type="VEuPathDB" id="PlasmoDB:PfGN01_060033900"/>
<dbReference type="VEuPathDB" id="PlasmoDB:PfHB3_060032400"/>
<dbReference type="VEuPathDB" id="PlasmoDB:PfIT_060032000"/>
<dbReference type="VEuPathDB" id="PlasmoDB:PfKE01_060034300"/>
<dbReference type="VEuPathDB" id="PlasmoDB:PfKH01_060035200"/>
<dbReference type="VEuPathDB" id="PlasmoDB:PfKH02_060034700"/>
<dbReference type="VEuPathDB" id="PlasmoDB:PfML01_060032000"/>
<dbReference type="VEuPathDB" id="PlasmoDB:PfNF135_060032400"/>
<dbReference type="VEuPathDB" id="PlasmoDB:PfNF166_060032700"/>
<dbReference type="VEuPathDB" id="PlasmoDB:PfNF54_060033200"/>
<dbReference type="VEuPathDB" id="PlasmoDB:PfSD01_060032100"/>
<dbReference type="VEuPathDB" id="PlasmoDB:PfSN01_060033000"/>
<dbReference type="VEuPathDB" id="PlasmoDB:PfTG01_060033500"/>
<dbReference type="GO" id="GO:0005789">
    <property type="term" value="C:endoplasmic reticulum membrane"/>
    <property type="evidence" value="ECO:0007669"/>
    <property type="project" value="UniProtKB-SubCell"/>
</dbReference>
<dbReference type="GO" id="GO:0005634">
    <property type="term" value="C:nucleus"/>
    <property type="evidence" value="ECO:0007669"/>
    <property type="project" value="TreeGrafter"/>
</dbReference>
<dbReference type="GO" id="GO:0005524">
    <property type="term" value="F:ATP binding"/>
    <property type="evidence" value="ECO:0007669"/>
    <property type="project" value="UniProtKB-KW"/>
</dbReference>
<dbReference type="GO" id="GO:0004694">
    <property type="term" value="F:eukaryotic translation initiation factor 2alpha kinase activity"/>
    <property type="evidence" value="ECO:0007669"/>
    <property type="project" value="TreeGrafter"/>
</dbReference>
<dbReference type="GO" id="GO:0017148">
    <property type="term" value="P:negative regulation of translation"/>
    <property type="evidence" value="ECO:0007669"/>
    <property type="project" value="UniProtKB-KW"/>
</dbReference>
<dbReference type="CDD" id="cd13996">
    <property type="entry name" value="STKc_EIF2AK"/>
    <property type="match status" value="1"/>
</dbReference>
<dbReference type="FunFam" id="1.10.510.10:FF:000615">
    <property type="entry name" value="Eukaryotic translation initiation factor 2-alpha kinase"/>
    <property type="match status" value="1"/>
</dbReference>
<dbReference type="FunFam" id="3.30.200.20:FF:000516">
    <property type="entry name" value="Protein kinase PK4, putative"/>
    <property type="match status" value="1"/>
</dbReference>
<dbReference type="Gene3D" id="3.30.200.20">
    <property type="entry name" value="Phosphorylase Kinase, domain 1"/>
    <property type="match status" value="1"/>
</dbReference>
<dbReference type="Gene3D" id="1.10.510.10">
    <property type="entry name" value="Transferase(Phosphotransferase) domain 1"/>
    <property type="match status" value="1"/>
</dbReference>
<dbReference type="InterPro" id="IPR050339">
    <property type="entry name" value="CC_SR_Kinase"/>
</dbReference>
<dbReference type="InterPro" id="IPR011009">
    <property type="entry name" value="Kinase-like_dom_sf"/>
</dbReference>
<dbReference type="InterPro" id="IPR000719">
    <property type="entry name" value="Prot_kinase_dom"/>
</dbReference>
<dbReference type="InterPro" id="IPR017441">
    <property type="entry name" value="Protein_kinase_ATP_BS"/>
</dbReference>
<dbReference type="InterPro" id="IPR008271">
    <property type="entry name" value="Ser/Thr_kinase_AS"/>
</dbReference>
<dbReference type="PANTHER" id="PTHR11042:SF160">
    <property type="entry name" value="EUKARYOTIC TRANSLATION INITIATION FACTOR 2-ALPHA KINASE 1"/>
    <property type="match status" value="1"/>
</dbReference>
<dbReference type="PANTHER" id="PTHR11042">
    <property type="entry name" value="EUKARYOTIC TRANSLATION INITIATION FACTOR 2-ALPHA KINASE EIF2-ALPHA KINASE -RELATED"/>
    <property type="match status" value="1"/>
</dbReference>
<dbReference type="Pfam" id="PF00069">
    <property type="entry name" value="Pkinase"/>
    <property type="match status" value="1"/>
</dbReference>
<dbReference type="SMART" id="SM00220">
    <property type="entry name" value="S_TKc"/>
    <property type="match status" value="1"/>
</dbReference>
<dbReference type="SUPFAM" id="SSF56112">
    <property type="entry name" value="Protein kinase-like (PK-like)"/>
    <property type="match status" value="1"/>
</dbReference>
<dbReference type="PROSITE" id="PS00107">
    <property type="entry name" value="PROTEIN_KINASE_ATP"/>
    <property type="match status" value="1"/>
</dbReference>
<dbReference type="PROSITE" id="PS50011">
    <property type="entry name" value="PROTEIN_KINASE_DOM"/>
    <property type="match status" value="1"/>
</dbReference>
<dbReference type="PROSITE" id="PS00108">
    <property type="entry name" value="PROTEIN_KINASE_ST"/>
    <property type="match status" value="1"/>
</dbReference>
<organism evidence="10">
    <name type="scientific">Plasmodium falciparum</name>
    <dbReference type="NCBI Taxonomy" id="5833"/>
    <lineage>
        <taxon>Eukaryota</taxon>
        <taxon>Sar</taxon>
        <taxon>Alveolata</taxon>
        <taxon>Apicomplexa</taxon>
        <taxon>Aconoidasida</taxon>
        <taxon>Haemosporida</taxon>
        <taxon>Plasmodiidae</taxon>
        <taxon>Plasmodium</taxon>
        <taxon>Plasmodium (Laverania)</taxon>
    </lineage>
</organism>
<evidence type="ECO:0000250" key="1">
    <source>
        <dbReference type="UniProtKB" id="A0A509AMC3"/>
    </source>
</evidence>
<evidence type="ECO:0000250" key="2">
    <source>
        <dbReference type="UniProtKB" id="C6KTB8"/>
    </source>
</evidence>
<evidence type="ECO:0000255" key="3"/>
<evidence type="ECO:0000255" key="4">
    <source>
        <dbReference type="PROSITE-ProRule" id="PRU00159"/>
    </source>
</evidence>
<evidence type="ECO:0000256" key="5">
    <source>
        <dbReference type="SAM" id="MobiDB-lite"/>
    </source>
</evidence>
<evidence type="ECO:0000269" key="6">
    <source>
    </source>
</evidence>
<evidence type="ECO:0000303" key="7">
    <source>
    </source>
</evidence>
<evidence type="ECO:0000305" key="8"/>
<evidence type="ECO:0000305" key="9">
    <source>
    </source>
</evidence>
<evidence type="ECO:0000312" key="10">
    <source>
        <dbReference type="EMBL" id="CAA63839.1"/>
    </source>
</evidence>
<feature type="chain" id="PRO_0000456977" description="Eukaryotic translation initiation factor 2-alpha kinase PK4">
    <location>
        <begin position="1" status="less than"/>
        <end position="1123"/>
    </location>
</feature>
<feature type="repeat" description="1" evidence="9">
    <location>
        <begin position="576"/>
        <end position="582"/>
    </location>
</feature>
<feature type="repeat" description="2" evidence="9">
    <location>
        <begin position="583"/>
        <end position="589"/>
    </location>
</feature>
<feature type="repeat" description="3" evidence="9">
    <location>
        <begin position="590"/>
        <end position="596"/>
    </location>
</feature>
<feature type="repeat" description="4" evidence="9">
    <location>
        <begin position="597"/>
        <end position="603"/>
    </location>
</feature>
<feature type="repeat" description="5" evidence="9">
    <location>
        <begin position="604"/>
        <end position="610"/>
    </location>
</feature>
<feature type="domain" description="Protein kinase" evidence="4">
    <location>
        <begin position="678"/>
        <end position="1049"/>
    </location>
</feature>
<feature type="region of interest" description="Disordered" evidence="5">
    <location>
        <begin position="1"/>
        <end position="30"/>
    </location>
</feature>
<feature type="region of interest" description="Disordered" evidence="5">
    <location>
        <begin position="409"/>
        <end position="493"/>
    </location>
</feature>
<feature type="region of interest" description="Disordered" evidence="5">
    <location>
        <begin position="572"/>
        <end position="609"/>
    </location>
</feature>
<feature type="region of interest" description="5 X 7 AA tandem repeat of D-K-N-[GE]-L-D-[GD]" evidence="9">
    <location>
        <begin position="576"/>
        <end position="610"/>
    </location>
</feature>
<feature type="region of interest" description="Disordered" evidence="5">
    <location>
        <begin position="742"/>
        <end position="800"/>
    </location>
</feature>
<feature type="compositionally biased region" description="Basic and acidic residues" evidence="5">
    <location>
        <begin position="21"/>
        <end position="30"/>
    </location>
</feature>
<feature type="compositionally biased region" description="Basic and acidic residues" evidence="5">
    <location>
        <begin position="419"/>
        <end position="428"/>
    </location>
</feature>
<feature type="compositionally biased region" description="Basic residues" evidence="5">
    <location>
        <begin position="455"/>
        <end position="477"/>
    </location>
</feature>
<feature type="compositionally biased region" description="Acidic residues" evidence="5">
    <location>
        <begin position="743"/>
        <end position="754"/>
    </location>
</feature>
<feature type="active site" description="Proton acceptor" evidence="4">
    <location>
        <position position="886"/>
    </location>
</feature>
<feature type="binding site" evidence="8">
    <location>
        <begin position="245"/>
        <end position="253"/>
    </location>
    <ligand>
        <name>ATP</name>
        <dbReference type="ChEBI" id="CHEBI:30616"/>
    </ligand>
</feature>
<feature type="binding site" evidence="8">
    <location>
        <position position="270"/>
    </location>
    <ligand>
        <name>ATP</name>
        <dbReference type="ChEBI" id="CHEBI:30616"/>
    </ligand>
</feature>
<feature type="modified residue" description="Phosphothreonine" evidence="1">
    <location>
        <position position="953"/>
    </location>
</feature>
<feature type="non-terminal residue" evidence="8">
    <location>
        <position position="1"/>
    </location>
</feature>
<comment type="function">
    <text evidence="2 6">During the asexual blood stage, phosphorylates translation factor eIF2alpha in late schizonts resulting in protein translation inhibition (PubMed:9371731). Plays a role in trophozoite differentiation into schizonts (By similarity).</text>
</comment>
<comment type="catalytic activity">
    <reaction evidence="6">
        <text>L-seryl-[protein] + ATP = O-phospho-L-seryl-[protein] + ADP + H(+)</text>
        <dbReference type="Rhea" id="RHEA:17989"/>
        <dbReference type="Rhea" id="RHEA-COMP:9863"/>
        <dbReference type="Rhea" id="RHEA-COMP:11604"/>
        <dbReference type="ChEBI" id="CHEBI:15378"/>
        <dbReference type="ChEBI" id="CHEBI:29999"/>
        <dbReference type="ChEBI" id="CHEBI:30616"/>
        <dbReference type="ChEBI" id="CHEBI:83421"/>
        <dbReference type="ChEBI" id="CHEBI:456216"/>
        <dbReference type="EC" id="2.7.11.1"/>
    </reaction>
    <physiologicalReaction direction="left-to-right" evidence="6">
        <dbReference type="Rhea" id="RHEA:17990"/>
    </physiologicalReaction>
</comment>
<comment type="catalytic activity">
    <reaction evidence="1">
        <text>L-threonyl-[protein] + ATP = O-phospho-L-threonyl-[protein] + ADP + H(+)</text>
        <dbReference type="Rhea" id="RHEA:46608"/>
        <dbReference type="Rhea" id="RHEA-COMP:11060"/>
        <dbReference type="Rhea" id="RHEA-COMP:11605"/>
        <dbReference type="ChEBI" id="CHEBI:15378"/>
        <dbReference type="ChEBI" id="CHEBI:30013"/>
        <dbReference type="ChEBI" id="CHEBI:30616"/>
        <dbReference type="ChEBI" id="CHEBI:61977"/>
        <dbReference type="ChEBI" id="CHEBI:456216"/>
        <dbReference type="EC" id="2.7.11.1"/>
    </reaction>
    <physiologicalReaction direction="left-to-right" evidence="1">
        <dbReference type="Rhea" id="RHEA:46609"/>
    </physiologicalReaction>
</comment>
<comment type="activity regulation">
    <text evidence="2">Dissociation from BIP and oligomerization, may results autophosphorylation and kinase activity induction.</text>
</comment>
<comment type="subunit">
    <text evidence="1 2">May form oligomers in response to stress; oligomerization may result in catalytic activity (By similarity). Interacts with BIP; the interaction is disrupted in response to stress (By similarity).</text>
</comment>
<comment type="subcellular location">
    <subcellularLocation>
        <location evidence="1">Endoplasmic reticulum membrane</location>
        <topology evidence="3">Multi-pass membrane protein</topology>
    </subcellularLocation>
</comment>
<comment type="developmental stage">
    <text evidence="6">Expressed during the asexual blood stage, including rings, trophozoites, schizonts and free merozoites (at protein level).</text>
</comment>
<comment type="PTM">
    <text evidence="6">Auto-phosphorylated.</text>
</comment>
<comment type="similarity">
    <text evidence="8">Belongs to the protein kinase superfamily. Ser/Thr protein kinase family. GCN2 subfamily.</text>
</comment>
<comment type="caution">
    <text evidence="6">Smaller forms of 80-90kDa appear to be present in the asexual blood stage suggesting that the protein may be proteolytically cleaved (PubMed:9371731). They localize to the cytoplasm in schizonts, to organelles in all blood stages and to the host erythrocyte membrane during schizont segmentation (PubMed:9371731).</text>
</comment>
<comment type="sequence caution" evidence="8">
    <conflict type="erroneous initiation">
        <sequence resource="EMBL-CDS" id="CAA63839"/>
    </conflict>
    <text>Truncated N-terminus.</text>
</comment>
<reference evidence="10" key="1">
    <citation type="journal article" date="1997" name="Biochem. J.">
        <title>Molecular cloning, characterization and localization of PfPK4, an elF-2alpha kinase-related enzyme from the malarial parasite Plasmodium falciparum.</title>
        <authorList>
            <person name="Moehrle J.J."/>
            <person name="Zhao Y."/>
            <person name="Wernli B."/>
            <person name="Franklin R.M."/>
            <person name="Kappes B."/>
        </authorList>
    </citation>
    <scope>NUCLEOTIDE SEQUENCE [GENOMIC DNA]</scope>
    <scope>FUNCTION</scope>
    <scope>CATALYTIC ACTIVITY</scope>
    <scope>DEVELOPMENTAL STAGE</scope>
    <scope>PHOSPHORYLATION</scope>
    <scope>REPEATS</scope>
    <source>
        <strain evidence="10">K1</strain>
    </source>
</reference>
<gene>
    <name evidence="7" type="primary">PK4</name>
</gene>